<gene>
    <name evidence="1" type="primary">proS</name>
    <name type="ordered locus">SPD_0246</name>
</gene>
<dbReference type="EC" id="6.1.1.15" evidence="1"/>
<dbReference type="EMBL" id="CP000410">
    <property type="protein sequence ID" value="ABJ54259.1"/>
    <property type="molecule type" value="Genomic_DNA"/>
</dbReference>
<dbReference type="RefSeq" id="WP_000814078.1">
    <property type="nucleotide sequence ID" value="NZ_JAMLJR010000002.1"/>
</dbReference>
<dbReference type="SMR" id="Q04MI4"/>
<dbReference type="PaxDb" id="373153-SPD_0246"/>
<dbReference type="KEGG" id="spd:SPD_0246"/>
<dbReference type="eggNOG" id="COG0442">
    <property type="taxonomic scope" value="Bacteria"/>
</dbReference>
<dbReference type="HOGENOM" id="CLU_016739_0_0_9"/>
<dbReference type="BioCyc" id="SPNE373153:G1G6V-270-MONOMER"/>
<dbReference type="Proteomes" id="UP000001452">
    <property type="component" value="Chromosome"/>
</dbReference>
<dbReference type="GO" id="GO:0005829">
    <property type="term" value="C:cytosol"/>
    <property type="evidence" value="ECO:0007669"/>
    <property type="project" value="TreeGrafter"/>
</dbReference>
<dbReference type="GO" id="GO:0002161">
    <property type="term" value="F:aminoacyl-tRNA deacylase activity"/>
    <property type="evidence" value="ECO:0007669"/>
    <property type="project" value="InterPro"/>
</dbReference>
<dbReference type="GO" id="GO:0005524">
    <property type="term" value="F:ATP binding"/>
    <property type="evidence" value="ECO:0007669"/>
    <property type="project" value="UniProtKB-UniRule"/>
</dbReference>
<dbReference type="GO" id="GO:0140096">
    <property type="term" value="F:catalytic activity, acting on a protein"/>
    <property type="evidence" value="ECO:0007669"/>
    <property type="project" value="UniProtKB-ARBA"/>
</dbReference>
<dbReference type="GO" id="GO:0004827">
    <property type="term" value="F:proline-tRNA ligase activity"/>
    <property type="evidence" value="ECO:0007669"/>
    <property type="project" value="UniProtKB-UniRule"/>
</dbReference>
<dbReference type="GO" id="GO:0016740">
    <property type="term" value="F:transferase activity"/>
    <property type="evidence" value="ECO:0007669"/>
    <property type="project" value="UniProtKB-ARBA"/>
</dbReference>
<dbReference type="GO" id="GO:0006433">
    <property type="term" value="P:prolyl-tRNA aminoacylation"/>
    <property type="evidence" value="ECO:0007669"/>
    <property type="project" value="UniProtKB-UniRule"/>
</dbReference>
<dbReference type="CDD" id="cd04334">
    <property type="entry name" value="ProRS-INS"/>
    <property type="match status" value="1"/>
</dbReference>
<dbReference type="CDD" id="cd00861">
    <property type="entry name" value="ProRS_anticodon_short"/>
    <property type="match status" value="1"/>
</dbReference>
<dbReference type="CDD" id="cd00779">
    <property type="entry name" value="ProRS_core_prok"/>
    <property type="match status" value="1"/>
</dbReference>
<dbReference type="FunFam" id="3.30.930.10:FF:000062">
    <property type="entry name" value="Proline--tRNA ligase"/>
    <property type="match status" value="1"/>
</dbReference>
<dbReference type="FunFam" id="3.30.930.10:FF:000070">
    <property type="entry name" value="Proline--tRNA ligase"/>
    <property type="match status" value="1"/>
</dbReference>
<dbReference type="FunFam" id="3.40.50.800:FF:000011">
    <property type="entry name" value="Proline--tRNA ligase"/>
    <property type="match status" value="1"/>
</dbReference>
<dbReference type="FunFam" id="3.90.960.10:FF:000004">
    <property type="entry name" value="Proline--tRNA ligase"/>
    <property type="match status" value="1"/>
</dbReference>
<dbReference type="Gene3D" id="3.40.50.800">
    <property type="entry name" value="Anticodon-binding domain"/>
    <property type="match status" value="1"/>
</dbReference>
<dbReference type="Gene3D" id="3.30.930.10">
    <property type="entry name" value="Bira Bifunctional Protein, Domain 2"/>
    <property type="match status" value="2"/>
</dbReference>
<dbReference type="Gene3D" id="3.90.960.10">
    <property type="entry name" value="YbaK/aminoacyl-tRNA synthetase-associated domain"/>
    <property type="match status" value="1"/>
</dbReference>
<dbReference type="HAMAP" id="MF_01569">
    <property type="entry name" value="Pro_tRNA_synth_type1"/>
    <property type="match status" value="1"/>
</dbReference>
<dbReference type="InterPro" id="IPR002314">
    <property type="entry name" value="aa-tRNA-synt_IIb"/>
</dbReference>
<dbReference type="InterPro" id="IPR006195">
    <property type="entry name" value="aa-tRNA-synth_II"/>
</dbReference>
<dbReference type="InterPro" id="IPR045864">
    <property type="entry name" value="aa-tRNA-synth_II/BPL/LPL"/>
</dbReference>
<dbReference type="InterPro" id="IPR004154">
    <property type="entry name" value="Anticodon-bd"/>
</dbReference>
<dbReference type="InterPro" id="IPR036621">
    <property type="entry name" value="Anticodon-bd_dom_sf"/>
</dbReference>
<dbReference type="InterPro" id="IPR002316">
    <property type="entry name" value="Pro-tRNA-ligase_IIa"/>
</dbReference>
<dbReference type="InterPro" id="IPR004500">
    <property type="entry name" value="Pro-tRNA-synth_IIa_bac-type"/>
</dbReference>
<dbReference type="InterPro" id="IPR023717">
    <property type="entry name" value="Pro-tRNA-Synthase_IIa_type1"/>
</dbReference>
<dbReference type="InterPro" id="IPR050062">
    <property type="entry name" value="Pro-tRNA_synthetase"/>
</dbReference>
<dbReference type="InterPro" id="IPR044140">
    <property type="entry name" value="ProRS_anticodon_short"/>
</dbReference>
<dbReference type="InterPro" id="IPR033730">
    <property type="entry name" value="ProRS_core_prok"/>
</dbReference>
<dbReference type="InterPro" id="IPR036754">
    <property type="entry name" value="YbaK/aa-tRNA-synt-asso_dom_sf"/>
</dbReference>
<dbReference type="InterPro" id="IPR007214">
    <property type="entry name" value="YbaK/aa-tRNA-synth-assoc-dom"/>
</dbReference>
<dbReference type="NCBIfam" id="NF006625">
    <property type="entry name" value="PRK09194.1"/>
    <property type="match status" value="1"/>
</dbReference>
<dbReference type="NCBIfam" id="TIGR00409">
    <property type="entry name" value="proS_fam_II"/>
    <property type="match status" value="2"/>
</dbReference>
<dbReference type="PANTHER" id="PTHR42753">
    <property type="entry name" value="MITOCHONDRIAL RIBOSOME PROTEIN L39/PROLYL-TRNA LIGASE FAMILY MEMBER"/>
    <property type="match status" value="1"/>
</dbReference>
<dbReference type="PANTHER" id="PTHR42753:SF2">
    <property type="entry name" value="PROLINE--TRNA LIGASE"/>
    <property type="match status" value="1"/>
</dbReference>
<dbReference type="Pfam" id="PF03129">
    <property type="entry name" value="HGTP_anticodon"/>
    <property type="match status" value="1"/>
</dbReference>
<dbReference type="Pfam" id="PF00587">
    <property type="entry name" value="tRNA-synt_2b"/>
    <property type="match status" value="1"/>
</dbReference>
<dbReference type="Pfam" id="PF04073">
    <property type="entry name" value="tRNA_edit"/>
    <property type="match status" value="1"/>
</dbReference>
<dbReference type="PRINTS" id="PR01046">
    <property type="entry name" value="TRNASYNTHPRO"/>
</dbReference>
<dbReference type="SUPFAM" id="SSF52954">
    <property type="entry name" value="Class II aaRS ABD-related"/>
    <property type="match status" value="1"/>
</dbReference>
<dbReference type="SUPFAM" id="SSF55681">
    <property type="entry name" value="Class II aaRS and biotin synthetases"/>
    <property type="match status" value="1"/>
</dbReference>
<dbReference type="SUPFAM" id="SSF55826">
    <property type="entry name" value="YbaK/ProRS associated domain"/>
    <property type="match status" value="1"/>
</dbReference>
<dbReference type="PROSITE" id="PS50862">
    <property type="entry name" value="AA_TRNA_LIGASE_II"/>
    <property type="match status" value="1"/>
</dbReference>
<accession>Q04MI4</accession>
<feature type="chain" id="PRO_0000288381" description="Proline--tRNA ligase">
    <location>
        <begin position="1"/>
        <end position="617"/>
    </location>
</feature>
<evidence type="ECO:0000255" key="1">
    <source>
        <dbReference type="HAMAP-Rule" id="MF_01569"/>
    </source>
</evidence>
<sequence>MKQSKMPIPTLREMPSDAQVISHALMLRAGYVRQVSAGVYSYLPLANRVIEKAKNIMRQEFEKIGAVEMLAPALLSAELWRESGRYETYGEDLYKLKNREKSDFILGPTHEETFTAIVRDSVKSYKQLPLNLYQIQPKYRDEKRPRNGLLRTREFIMKDAYSFHANYDSLDSVYDEYKAAYERIFTRSGLDFKAIIGDGGAMGGKDSQEFMAITSARTDLDRWVVLDKSVVSFDEIPVEVQEEIKAELLKWIVSGEDTIAYSSESSYAANLEMATNEYKPSNRVVAEEEVTRVATPDVKSIDEVAAFLNVPEEQTIKTLFYIADGELVAALLVGNDQLNEVKLKNHLGADFFDVASEEEVANVVQAGFGSLGPVGLPENIKIIADRKVQDVRNAVVGANEDGYHLTGVNPGRDFTAEYVDIREVREGEISPDGQGVLNFARGIEIGHIFKLGTRYSASMGADVLDENGRAVPIIMGCYGIGVSRLLSAVMEQHARLFVNKTPKGEYRYAWGINFPKELAPFDVHLITVNVKDEEAQALTEKLEASLMGAGYEVLTDDRNERVGVKFSDSDLIGLPIRITVGKKAADGIVEVKIKATGDTIEVHADNVLETLEILSKK</sequence>
<proteinExistence type="inferred from homology"/>
<organism>
    <name type="scientific">Streptococcus pneumoniae serotype 2 (strain D39 / NCTC 7466)</name>
    <dbReference type="NCBI Taxonomy" id="373153"/>
    <lineage>
        <taxon>Bacteria</taxon>
        <taxon>Bacillati</taxon>
        <taxon>Bacillota</taxon>
        <taxon>Bacilli</taxon>
        <taxon>Lactobacillales</taxon>
        <taxon>Streptococcaceae</taxon>
        <taxon>Streptococcus</taxon>
    </lineage>
</organism>
<comment type="function">
    <text evidence="1">Catalyzes the attachment of proline to tRNA(Pro) in a two-step reaction: proline is first activated by ATP to form Pro-AMP and then transferred to the acceptor end of tRNA(Pro). As ProRS can inadvertently accommodate and process non-cognate amino acids such as alanine and cysteine, to avoid such errors it has two additional distinct editing activities against alanine. One activity is designated as 'pretransfer' editing and involves the tRNA(Pro)-independent hydrolysis of activated Ala-AMP. The other activity is designated 'posttransfer' editing and involves deacylation of mischarged Ala-tRNA(Pro). The misacylated Cys-tRNA(Pro) is not edited by ProRS.</text>
</comment>
<comment type="catalytic activity">
    <reaction evidence="1">
        <text>tRNA(Pro) + L-proline + ATP = L-prolyl-tRNA(Pro) + AMP + diphosphate</text>
        <dbReference type="Rhea" id="RHEA:14305"/>
        <dbReference type="Rhea" id="RHEA-COMP:9700"/>
        <dbReference type="Rhea" id="RHEA-COMP:9702"/>
        <dbReference type="ChEBI" id="CHEBI:30616"/>
        <dbReference type="ChEBI" id="CHEBI:33019"/>
        <dbReference type="ChEBI" id="CHEBI:60039"/>
        <dbReference type="ChEBI" id="CHEBI:78442"/>
        <dbReference type="ChEBI" id="CHEBI:78532"/>
        <dbReference type="ChEBI" id="CHEBI:456215"/>
        <dbReference type="EC" id="6.1.1.15"/>
    </reaction>
</comment>
<comment type="subunit">
    <text evidence="1">Homodimer.</text>
</comment>
<comment type="subcellular location">
    <subcellularLocation>
        <location evidence="1">Cytoplasm</location>
    </subcellularLocation>
</comment>
<comment type="domain">
    <text evidence="1">Consists of three domains: the N-terminal catalytic domain, the editing domain and the C-terminal anticodon-binding domain.</text>
</comment>
<comment type="similarity">
    <text evidence="1">Belongs to the class-II aminoacyl-tRNA synthetase family. ProS type 1 subfamily.</text>
</comment>
<keyword id="KW-0030">Aminoacyl-tRNA synthetase</keyword>
<keyword id="KW-0067">ATP-binding</keyword>
<keyword id="KW-0963">Cytoplasm</keyword>
<keyword id="KW-0436">Ligase</keyword>
<keyword id="KW-0547">Nucleotide-binding</keyword>
<keyword id="KW-0648">Protein biosynthesis</keyword>
<keyword id="KW-1185">Reference proteome</keyword>
<protein>
    <recommendedName>
        <fullName evidence="1">Proline--tRNA ligase</fullName>
        <ecNumber evidence="1">6.1.1.15</ecNumber>
    </recommendedName>
    <alternativeName>
        <fullName evidence="1">Prolyl-tRNA synthetase</fullName>
        <shortName evidence="1">ProRS</shortName>
    </alternativeName>
</protein>
<name>SYP_STRP2</name>
<reference key="1">
    <citation type="journal article" date="2007" name="J. Bacteriol.">
        <title>Genome sequence of Avery's virulent serotype 2 strain D39 of Streptococcus pneumoniae and comparison with that of unencapsulated laboratory strain R6.</title>
        <authorList>
            <person name="Lanie J.A."/>
            <person name="Ng W.-L."/>
            <person name="Kazmierczak K.M."/>
            <person name="Andrzejewski T.M."/>
            <person name="Davidsen T.M."/>
            <person name="Wayne K.J."/>
            <person name="Tettelin H."/>
            <person name="Glass J.I."/>
            <person name="Winkler M.E."/>
        </authorList>
    </citation>
    <scope>NUCLEOTIDE SEQUENCE [LARGE SCALE GENOMIC DNA]</scope>
    <source>
        <strain>D39 / NCTC 7466</strain>
    </source>
</reference>